<dbReference type="EMBL" id="AF039263">
    <property type="protein sequence ID" value="AAC33540.1"/>
    <property type="molecule type" value="Genomic_DNA"/>
</dbReference>
<dbReference type="SMR" id="P92846"/>
<dbReference type="GO" id="GO:0005743">
    <property type="term" value="C:mitochondrial inner membrane"/>
    <property type="evidence" value="ECO:0007669"/>
    <property type="project" value="UniProtKB-SubCell"/>
</dbReference>
<dbReference type="GO" id="GO:0046872">
    <property type="term" value="F:metal ion binding"/>
    <property type="evidence" value="ECO:0007669"/>
    <property type="project" value="UniProtKB-KW"/>
</dbReference>
<dbReference type="GO" id="GO:0008121">
    <property type="term" value="F:ubiquinol-cytochrome-c reductase activity"/>
    <property type="evidence" value="ECO:0007669"/>
    <property type="project" value="TreeGrafter"/>
</dbReference>
<dbReference type="GO" id="GO:0006122">
    <property type="term" value="P:mitochondrial electron transport, ubiquinol to cytochrome c"/>
    <property type="evidence" value="ECO:0007669"/>
    <property type="project" value="TreeGrafter"/>
</dbReference>
<dbReference type="CDD" id="cd00284">
    <property type="entry name" value="Cytochrome_b_N"/>
    <property type="match status" value="1"/>
</dbReference>
<dbReference type="Gene3D" id="1.20.810.10">
    <property type="entry name" value="Cytochrome Bc1 Complex, Chain C"/>
    <property type="match status" value="1"/>
</dbReference>
<dbReference type="InterPro" id="IPR005797">
    <property type="entry name" value="Cyt_b/b6_N"/>
</dbReference>
<dbReference type="InterPro" id="IPR027387">
    <property type="entry name" value="Cytb/b6-like_sf"/>
</dbReference>
<dbReference type="InterPro" id="IPR048259">
    <property type="entry name" value="Cytochrome_b_N_euk/bac"/>
</dbReference>
<dbReference type="InterPro" id="IPR016174">
    <property type="entry name" value="Di-haem_cyt_TM"/>
</dbReference>
<dbReference type="PANTHER" id="PTHR19271">
    <property type="entry name" value="CYTOCHROME B"/>
    <property type="match status" value="1"/>
</dbReference>
<dbReference type="PANTHER" id="PTHR19271:SF16">
    <property type="entry name" value="CYTOCHROME B"/>
    <property type="match status" value="1"/>
</dbReference>
<dbReference type="Pfam" id="PF00033">
    <property type="entry name" value="Cytochrome_B"/>
    <property type="match status" value="1"/>
</dbReference>
<dbReference type="SUPFAM" id="SSF81342">
    <property type="entry name" value="Transmembrane di-heme cytochromes"/>
    <property type="match status" value="1"/>
</dbReference>
<dbReference type="PROSITE" id="PS51002">
    <property type="entry name" value="CYTB_NTER"/>
    <property type="match status" value="1"/>
</dbReference>
<name>CYB_BOTAT</name>
<protein>
    <recommendedName>
        <fullName>Cytochrome b</fullName>
    </recommendedName>
    <alternativeName>
        <fullName>Complex III subunit 3</fullName>
    </alternativeName>
    <alternativeName>
        <fullName>Complex III subunit III</fullName>
    </alternativeName>
    <alternativeName>
        <fullName>Cytochrome b-c1 complex subunit 3</fullName>
    </alternativeName>
    <alternativeName>
        <fullName>Ubiquinol-cytochrome-c reductase complex cytochrome b subunit</fullName>
    </alternativeName>
</protein>
<proteinExistence type="inferred from homology"/>
<reference key="1">
    <citation type="journal article" date="1998" name="Mol. Phylogenet. Evol.">
        <title>Weighting and congruence: a case study based on three mitochondrial genes in pitvipers.</title>
        <authorList>
            <person name="Vidal N."/>
            <person name="Lecointre G."/>
        </authorList>
    </citation>
    <scope>NUCLEOTIDE SEQUENCE [GENOMIC DNA]</scope>
</reference>
<reference key="2">
    <citation type="journal article" date="1997" name="C. R. Acad. Sci. III, Sci. Vie">
        <title>Molecular systematics of pitvipers: paraphyly of the Bothrops complex.</title>
        <authorList>
            <person name="Vidal N."/>
            <person name="Lecointre G."/>
            <person name="Vie J.-C."/>
            <person name="Gasc J.-P."/>
        </authorList>
    </citation>
    <scope>NUCLEOTIDE SEQUENCE [GENOMIC DNA] OF 1-132</scope>
</reference>
<comment type="function">
    <text evidence="2">Component of the ubiquinol-cytochrome c reductase complex (complex III or cytochrome b-c1 complex) that is part of the mitochondrial respiratory chain. The b-c1 complex mediates electron transfer from ubiquinol to cytochrome c. Contributes to the generation of a proton gradient across the mitochondrial membrane that is then used for ATP synthesis.</text>
</comment>
<comment type="cofactor">
    <cofactor evidence="2">
        <name>heme b</name>
        <dbReference type="ChEBI" id="CHEBI:60344"/>
    </cofactor>
    <text evidence="2">Binds 2 heme b groups non-covalently.</text>
</comment>
<comment type="subunit">
    <text evidence="2">The cytochrome bc1 complex contains 3 respiratory subunits (MT-CYB, CYC1 and UQCRFS1), 2 core proteins (UQCRC1 and UQCRC2) and probably 6 low-molecular weight proteins.</text>
</comment>
<comment type="subcellular location">
    <subcellularLocation>
        <location evidence="2">Mitochondrion inner membrane</location>
        <topology evidence="2">Multi-pass membrane protein</topology>
    </subcellularLocation>
</comment>
<comment type="miscellaneous">
    <text evidence="1">Heme 1 (or BL or b562) is low-potential and absorbs at about 562 nm, and heme 2 (or BH or b566) is high-potential and absorbs at about 566 nm.</text>
</comment>
<comment type="similarity">
    <text evidence="3">Belongs to the cytochrome b family.</text>
</comment>
<comment type="caution">
    <text evidence="2">The full-length protein contains only eight transmembrane helices, not nine as predicted by bioinformatics tools.</text>
</comment>
<feature type="chain" id="PRO_0000060682" description="Cytochrome b">
    <location>
        <begin position="1" status="less than"/>
        <end position="214" status="greater than"/>
    </location>
</feature>
<feature type="transmembrane region" description="Helical" evidence="3">
    <location>
        <begin position="31"/>
        <end position="51"/>
    </location>
</feature>
<feature type="transmembrane region" description="Helical" evidence="2">
    <location>
        <begin position="75"/>
        <end position="96"/>
    </location>
</feature>
<feature type="transmembrane region" description="Helical" evidence="2">
    <location>
        <begin position="111"/>
        <end position="131"/>
    </location>
</feature>
<feature type="transmembrane region" description="Helical" evidence="3">
    <location>
        <begin position="176"/>
        <end position="196"/>
    </location>
</feature>
<feature type="binding site" description="axial binding residue" evidence="2">
    <location>
        <position position="81"/>
    </location>
    <ligand>
        <name>heme b</name>
        <dbReference type="ChEBI" id="CHEBI:60344"/>
        <label>b562</label>
    </ligand>
    <ligandPart>
        <name>Fe</name>
        <dbReference type="ChEBI" id="CHEBI:18248"/>
    </ligandPart>
</feature>
<feature type="binding site" description="axial binding residue" evidence="2">
    <location>
        <position position="95"/>
    </location>
    <ligand>
        <name>heme b</name>
        <dbReference type="ChEBI" id="CHEBI:60344"/>
        <label>b566</label>
    </ligand>
    <ligandPart>
        <name>Fe</name>
        <dbReference type="ChEBI" id="CHEBI:18248"/>
    </ligandPart>
</feature>
<feature type="binding site" description="axial binding residue" evidence="2">
    <location>
        <position position="180"/>
    </location>
    <ligand>
        <name>heme b</name>
        <dbReference type="ChEBI" id="CHEBI:60344"/>
        <label>b562</label>
    </ligand>
    <ligandPart>
        <name>Fe</name>
        <dbReference type="ChEBI" id="CHEBI:18248"/>
    </ligandPart>
</feature>
<feature type="binding site" description="axial binding residue" evidence="2">
    <location>
        <position position="194"/>
    </location>
    <ligand>
        <name>heme b</name>
        <dbReference type="ChEBI" id="CHEBI:60344"/>
        <label>b566</label>
    </ligand>
    <ligandPart>
        <name>Fe</name>
        <dbReference type="ChEBI" id="CHEBI:18248"/>
    </ligandPart>
</feature>
<feature type="binding site" evidence="2">
    <location>
        <position position="199"/>
    </location>
    <ligand>
        <name>a ubiquinone</name>
        <dbReference type="ChEBI" id="CHEBI:16389"/>
    </ligand>
</feature>
<feature type="non-terminal residue">
    <location>
        <position position="1"/>
    </location>
</feature>
<feature type="non-terminal residue">
    <location>
        <position position="214"/>
    </location>
</feature>
<accession>P92846</accession>
<gene>
    <name type="primary">MT-CYB</name>
    <name type="synonym">COB</name>
    <name type="synonym">CYTB</name>
    <name type="synonym">MTCYB</name>
</gene>
<keyword id="KW-0249">Electron transport</keyword>
<keyword id="KW-0349">Heme</keyword>
<keyword id="KW-0408">Iron</keyword>
<keyword id="KW-0472">Membrane</keyword>
<keyword id="KW-0479">Metal-binding</keyword>
<keyword id="KW-0496">Mitochondrion</keyword>
<keyword id="KW-0999">Mitochondrion inner membrane</keyword>
<keyword id="KW-0679">Respiratory chain</keyword>
<keyword id="KW-0812">Transmembrane</keyword>
<keyword id="KW-1133">Transmembrane helix</keyword>
<keyword id="KW-0813">Transport</keyword>
<keyword id="KW-0830">Ubiquinone</keyword>
<evidence type="ECO:0000250" key="1"/>
<evidence type="ECO:0000250" key="2">
    <source>
        <dbReference type="UniProtKB" id="P00157"/>
    </source>
</evidence>
<evidence type="ECO:0000255" key="3">
    <source>
        <dbReference type="PROSITE-ProRule" id="PRU00968"/>
    </source>
</evidence>
<geneLocation type="mitochondrion"/>
<sequence>YINYKNMSHQHLLTLFNLLPVGSNISTWWNFGSMLLACLMIQIITGFFLAIHYTANINLAFSSIIHLSRDVPYGWIMQNTHAISASLFFICIYIHIARGFYYGSYLNKEVWLSGTTLLIILMATAFFGYVLPWGQMSFWAATVITNLLTAIPYLGTTLTTWLWGGFAINDPTLTRFFALHFILPFIIISMSSIHILLLHNEGSNNPLGTNSDID</sequence>
<organism>
    <name type="scientific">Bothrops atrox</name>
    <name type="common">Barba amarilla</name>
    <name type="synonym">Fer-de-lance</name>
    <dbReference type="NCBI Taxonomy" id="8725"/>
    <lineage>
        <taxon>Eukaryota</taxon>
        <taxon>Metazoa</taxon>
        <taxon>Chordata</taxon>
        <taxon>Craniata</taxon>
        <taxon>Vertebrata</taxon>
        <taxon>Euteleostomi</taxon>
        <taxon>Lepidosauria</taxon>
        <taxon>Squamata</taxon>
        <taxon>Bifurcata</taxon>
        <taxon>Unidentata</taxon>
        <taxon>Episquamata</taxon>
        <taxon>Toxicofera</taxon>
        <taxon>Serpentes</taxon>
        <taxon>Colubroidea</taxon>
        <taxon>Viperidae</taxon>
        <taxon>Crotalinae</taxon>
        <taxon>Bothrops</taxon>
    </lineage>
</organism>